<accession>Q9ZCQ6</accession>
<proteinExistence type="inferred from homology"/>
<gene>
    <name evidence="1" type="primary">rplD</name>
    <name type="ordered locus">RP658</name>
</gene>
<organism>
    <name type="scientific">Rickettsia prowazekii (strain Madrid E)</name>
    <dbReference type="NCBI Taxonomy" id="272947"/>
    <lineage>
        <taxon>Bacteria</taxon>
        <taxon>Pseudomonadati</taxon>
        <taxon>Pseudomonadota</taxon>
        <taxon>Alphaproteobacteria</taxon>
        <taxon>Rickettsiales</taxon>
        <taxon>Rickettsiaceae</taxon>
        <taxon>Rickettsieae</taxon>
        <taxon>Rickettsia</taxon>
        <taxon>typhus group</taxon>
    </lineage>
</organism>
<evidence type="ECO:0000255" key="1">
    <source>
        <dbReference type="HAMAP-Rule" id="MF_01328"/>
    </source>
</evidence>
<evidence type="ECO:0000256" key="2">
    <source>
        <dbReference type="SAM" id="MobiDB-lite"/>
    </source>
</evidence>
<evidence type="ECO:0000305" key="3"/>
<feature type="chain" id="PRO_0000129268" description="Large ribosomal subunit protein uL4">
    <location>
        <begin position="1"/>
        <end position="207"/>
    </location>
</feature>
<feature type="region of interest" description="Disordered" evidence="2">
    <location>
        <begin position="56"/>
        <end position="75"/>
    </location>
</feature>
<comment type="function">
    <text evidence="1">One of the primary rRNA binding proteins, this protein initially binds near the 5'-end of the 23S rRNA. It is important during the early stages of 50S assembly. It makes multiple contacts with different domains of the 23S rRNA in the assembled 50S subunit and ribosome.</text>
</comment>
<comment type="function">
    <text evidence="1">Forms part of the polypeptide exit tunnel.</text>
</comment>
<comment type="subunit">
    <text evidence="1">Part of the 50S ribosomal subunit.</text>
</comment>
<comment type="similarity">
    <text evidence="1">Belongs to the universal ribosomal protein uL4 family.</text>
</comment>
<keyword id="KW-1185">Reference proteome</keyword>
<keyword id="KW-0687">Ribonucleoprotein</keyword>
<keyword id="KW-0689">Ribosomal protein</keyword>
<keyword id="KW-0694">RNA-binding</keyword>
<keyword id="KW-0699">rRNA-binding</keyword>
<reference key="1">
    <citation type="journal article" date="1998" name="Nature">
        <title>The genome sequence of Rickettsia prowazekii and the origin of mitochondria.</title>
        <authorList>
            <person name="Andersson S.G.E."/>
            <person name="Zomorodipour A."/>
            <person name="Andersson J.O."/>
            <person name="Sicheritz-Ponten T."/>
            <person name="Alsmark U.C.M."/>
            <person name="Podowski R.M."/>
            <person name="Naeslund A.K."/>
            <person name="Eriksson A.-S."/>
            <person name="Winkler H.H."/>
            <person name="Kurland C.G."/>
        </authorList>
    </citation>
    <scope>NUCLEOTIDE SEQUENCE [LARGE SCALE GENOMIC DNA]</scope>
    <source>
        <strain>Madrid E</strain>
    </source>
</reference>
<sequence length="207" mass="23288">MKTKILSLANEEVGEITLNKDIFAVEFIRDDIIKQVIDWQRAKAMFGNHKTKTVSEVSGTTKKPFKQKGTGNARQGSLRSVQMRGGGISHGPKVRSHAIKLPKKVRKLGLIHALSEKYAEEKLLIIDSLKLDKPKTSILVNLLSKFQGQSFFVIDGNKVDINFSLATKNIYNTLIVPQIGANVYDIIRHEYVLLSQEAVSFLEERLR</sequence>
<dbReference type="EMBL" id="AJ235272">
    <property type="protein sequence ID" value="CAA15098.1"/>
    <property type="molecule type" value="Genomic_DNA"/>
</dbReference>
<dbReference type="PIR" id="H71671">
    <property type="entry name" value="H71671"/>
</dbReference>
<dbReference type="RefSeq" id="NP_221022.1">
    <property type="nucleotide sequence ID" value="NC_000963.1"/>
</dbReference>
<dbReference type="RefSeq" id="WP_004596200.1">
    <property type="nucleotide sequence ID" value="NC_000963.1"/>
</dbReference>
<dbReference type="SMR" id="Q9ZCQ6"/>
<dbReference type="STRING" id="272947.gene:17555735"/>
<dbReference type="EnsemblBacteria" id="CAA15098">
    <property type="protein sequence ID" value="CAA15098"/>
    <property type="gene ID" value="CAA15098"/>
</dbReference>
<dbReference type="GeneID" id="57569783"/>
<dbReference type="KEGG" id="rpr:RP658"/>
<dbReference type="PATRIC" id="fig|272947.5.peg.680"/>
<dbReference type="eggNOG" id="COG0088">
    <property type="taxonomic scope" value="Bacteria"/>
</dbReference>
<dbReference type="HOGENOM" id="CLU_041575_5_1_5"/>
<dbReference type="OrthoDB" id="9803201at2"/>
<dbReference type="Proteomes" id="UP000002480">
    <property type="component" value="Chromosome"/>
</dbReference>
<dbReference type="GO" id="GO:1990904">
    <property type="term" value="C:ribonucleoprotein complex"/>
    <property type="evidence" value="ECO:0007669"/>
    <property type="project" value="UniProtKB-KW"/>
</dbReference>
<dbReference type="GO" id="GO:0005840">
    <property type="term" value="C:ribosome"/>
    <property type="evidence" value="ECO:0007669"/>
    <property type="project" value="UniProtKB-KW"/>
</dbReference>
<dbReference type="GO" id="GO:0019843">
    <property type="term" value="F:rRNA binding"/>
    <property type="evidence" value="ECO:0007669"/>
    <property type="project" value="UniProtKB-UniRule"/>
</dbReference>
<dbReference type="GO" id="GO:0003735">
    <property type="term" value="F:structural constituent of ribosome"/>
    <property type="evidence" value="ECO:0007669"/>
    <property type="project" value="InterPro"/>
</dbReference>
<dbReference type="GO" id="GO:0006412">
    <property type="term" value="P:translation"/>
    <property type="evidence" value="ECO:0007669"/>
    <property type="project" value="UniProtKB-UniRule"/>
</dbReference>
<dbReference type="FunFam" id="3.40.1370.10:FF:000015">
    <property type="entry name" value="50S ribosomal protein L4"/>
    <property type="match status" value="1"/>
</dbReference>
<dbReference type="Gene3D" id="3.40.1370.10">
    <property type="match status" value="1"/>
</dbReference>
<dbReference type="HAMAP" id="MF_01328_B">
    <property type="entry name" value="Ribosomal_uL4_B"/>
    <property type="match status" value="1"/>
</dbReference>
<dbReference type="InterPro" id="IPR002136">
    <property type="entry name" value="Ribosomal_uL4"/>
</dbReference>
<dbReference type="InterPro" id="IPR013005">
    <property type="entry name" value="Ribosomal_uL4-like"/>
</dbReference>
<dbReference type="InterPro" id="IPR023574">
    <property type="entry name" value="Ribosomal_uL4_dom_sf"/>
</dbReference>
<dbReference type="NCBIfam" id="TIGR03953">
    <property type="entry name" value="rplD_bact"/>
    <property type="match status" value="1"/>
</dbReference>
<dbReference type="PANTHER" id="PTHR10746">
    <property type="entry name" value="50S RIBOSOMAL PROTEIN L4"/>
    <property type="match status" value="1"/>
</dbReference>
<dbReference type="PANTHER" id="PTHR10746:SF6">
    <property type="entry name" value="LARGE RIBOSOMAL SUBUNIT PROTEIN UL4M"/>
    <property type="match status" value="1"/>
</dbReference>
<dbReference type="Pfam" id="PF00573">
    <property type="entry name" value="Ribosomal_L4"/>
    <property type="match status" value="1"/>
</dbReference>
<dbReference type="SUPFAM" id="SSF52166">
    <property type="entry name" value="Ribosomal protein L4"/>
    <property type="match status" value="1"/>
</dbReference>
<name>RL4_RICPR</name>
<protein>
    <recommendedName>
        <fullName evidence="1">Large ribosomal subunit protein uL4</fullName>
    </recommendedName>
    <alternativeName>
        <fullName evidence="3">50S ribosomal protein L4</fullName>
    </alternativeName>
</protein>